<sequence length="213" mass="23587">MAETYDFLFKFLVIGSAGTGKSCLLHQFIENKFKQDSNHTIGVEFGSRVVNVGGKTVKLQIWDTAGQERFRSVTRSYYRGAAGALLVYDITSRETYNSLAAWLTDARTLASPNIVVILCGNKKDLDPEREVTFLEASRFAQENELMFLETSALTGENVEEAFLKCARTILNKIDSGELDPERMGSGIQYGDASLRQLRQPRSAQAVAPQPCGC</sequence>
<gene>
    <name evidence="10" type="primary">RAB4B</name>
    <name evidence="8" type="synonym">RAB4</name>
    <name type="ORF">PP1596</name>
</gene>
<name>RAB4B_HUMAN</name>
<reference key="1">
    <citation type="submission" date="2003-07" db="EMBL/GenBank/DDBJ databases">
        <title>Cloning and characterization of a novel human cDNA homologous to R.norvegicus rab4b mRNA.</title>
        <authorList>
            <person name="Chu J.H."/>
            <person name="Yu L."/>
            <person name="Cui W.C."/>
            <person name="Bi A.D."/>
            <person name="Huang J."/>
            <person name="Zhao S.Y."/>
        </authorList>
    </citation>
    <scope>NUCLEOTIDE SEQUENCE [MRNA] (ISOFORM 1)</scope>
</reference>
<reference key="2">
    <citation type="submission" date="1999-07" db="EMBL/GenBank/DDBJ databases">
        <title>Novel genes expressed in hematopoietic stem/progenitor cells from myelodysplastic syndrome patients.</title>
        <authorList>
            <person name="Huang C."/>
            <person name="Wu T."/>
            <person name="Xu S."/>
            <person name="Gu W."/>
            <person name="Wang Y."/>
            <person name="Han Z."/>
            <person name="Chen Z."/>
        </authorList>
    </citation>
    <scope>NUCLEOTIDE SEQUENCE [LARGE SCALE MRNA] (ISOFORM 1)</scope>
    <source>
        <tissue>Hematopoietic stem cell</tissue>
    </source>
</reference>
<reference key="3">
    <citation type="journal article" date="2004" name="Proc. Natl. Acad. Sci. U.S.A.">
        <title>Large-scale cDNA transfection screening for genes related to cancer development and progression.</title>
        <authorList>
            <person name="Wan D."/>
            <person name="Gong Y."/>
            <person name="Qin W."/>
            <person name="Zhang P."/>
            <person name="Li J."/>
            <person name="Wei L."/>
            <person name="Zhou X."/>
            <person name="Li H."/>
            <person name="Qiu X."/>
            <person name="Zhong F."/>
            <person name="He L."/>
            <person name="Yu J."/>
            <person name="Yao G."/>
            <person name="Jiang H."/>
            <person name="Qian L."/>
            <person name="Yu Y."/>
            <person name="Shu H."/>
            <person name="Chen X."/>
            <person name="Xu H."/>
            <person name="Guo M."/>
            <person name="Pan Z."/>
            <person name="Chen Y."/>
            <person name="Ge C."/>
            <person name="Yang S."/>
            <person name="Gu J."/>
        </authorList>
    </citation>
    <scope>NUCLEOTIDE SEQUENCE [LARGE SCALE MRNA] (ISOFORM 2)</scope>
</reference>
<reference key="4">
    <citation type="submission" date="2002-04" db="EMBL/GenBank/DDBJ databases">
        <title>cDNA clones of human proteins involved in signal transduction sequenced by the Guthrie cDNA resource center (www.cdna.org).</title>
        <authorList>
            <person name="Puhl H.L. III"/>
            <person name="Ikeda S.R."/>
            <person name="Aronstam R.S."/>
        </authorList>
    </citation>
    <scope>NUCLEOTIDE SEQUENCE [LARGE SCALE MRNA] (ISOFORM 1)</scope>
    <source>
        <tissue>Brain</tissue>
    </source>
</reference>
<reference key="5">
    <citation type="journal article" date="2004" name="Genome Res.">
        <title>The status, quality, and expansion of the NIH full-length cDNA project: the Mammalian Gene Collection (MGC).</title>
        <authorList>
            <consortium name="The MGC Project Team"/>
        </authorList>
    </citation>
    <scope>NUCLEOTIDE SEQUENCE [LARGE SCALE MRNA] (ISOFORM 1)</scope>
    <source>
        <tissue>Mammary gland</tissue>
    </source>
</reference>
<reference key="6">
    <citation type="journal article" date="2010" name="Mol. Biol. Cell">
        <title>Functional cross-talk between Rab14 and Rab4 through a dual effector, RUFY1/Rabip4.</title>
        <authorList>
            <person name="Yamamoto H."/>
            <person name="Koga H."/>
            <person name="Katoh Y."/>
            <person name="Takahashi S."/>
            <person name="Nakayama K."/>
            <person name="Shin H.W."/>
        </authorList>
    </citation>
    <scope>FUNCTION</scope>
    <scope>SUBCELLULAR LOCATION</scope>
    <scope>INTERACTION WITH RUFY1</scope>
    <scope>MUTAGENESIS OF GLN-67</scope>
</reference>
<reference key="7">
    <citation type="journal article" date="2011" name="BMC Syst. Biol.">
        <title>Initial characterization of the human central proteome.</title>
        <authorList>
            <person name="Burkard T.R."/>
            <person name="Planyavsky M."/>
            <person name="Kaupe I."/>
            <person name="Breitwieser F.P."/>
            <person name="Buerckstuemmer T."/>
            <person name="Bennett K.L."/>
            <person name="Superti-Furga G."/>
            <person name="Colinge J."/>
        </authorList>
    </citation>
    <scope>IDENTIFICATION BY MASS SPECTROMETRY [LARGE SCALE ANALYSIS]</scope>
</reference>
<reference key="8">
    <citation type="journal article" date="2012" name="Mol. Cell. Proteomics">
        <title>Comparative large-scale characterisation of plant vs. mammal proteins reveals similar and idiosyncratic N-alpha acetylation features.</title>
        <authorList>
            <person name="Bienvenut W.V."/>
            <person name="Sumpton D."/>
            <person name="Martinez A."/>
            <person name="Lilla S."/>
            <person name="Espagne C."/>
            <person name="Meinnel T."/>
            <person name="Giglione C."/>
        </authorList>
    </citation>
    <scope>ACETYLATION [LARGE SCALE ANALYSIS] AT ALA-2</scope>
    <scope>CLEAVAGE OF INITIATOR METHIONINE [LARGE SCALE ANALYSIS]</scope>
    <scope>IDENTIFICATION BY MASS SPECTROMETRY [LARGE SCALE ANALYSIS]</scope>
</reference>
<reference key="9">
    <citation type="journal article" date="2013" name="J. Proteome Res.">
        <title>Toward a comprehensive characterization of a human cancer cell phosphoproteome.</title>
        <authorList>
            <person name="Zhou H."/>
            <person name="Di Palma S."/>
            <person name="Preisinger C."/>
            <person name="Peng M."/>
            <person name="Polat A.N."/>
            <person name="Heck A.J."/>
            <person name="Mohammed S."/>
        </authorList>
    </citation>
    <scope>PHOSPHORYLATION [LARGE SCALE ANALYSIS] AT SER-193</scope>
    <scope>IDENTIFICATION BY MASS SPECTROMETRY [LARGE SCALE ANALYSIS]</scope>
    <source>
        <tissue>Erythroleukemia</tissue>
    </source>
</reference>
<reference evidence="11" key="10">
    <citation type="submission" date="2009-02" db="PDB data bank">
        <title>Crystal structure of human RAB4B in complex with GDP.</title>
        <authorList>
            <consortium name="Structural genomics consortium (SGC)"/>
        </authorList>
    </citation>
    <scope>X-RAY CRYSTALLOGRAPHY (2.2 ANGSTROMS) OF 6-183 IN COMPLEX WITH GDP AND MG(2+)</scope>
    <scope>COFACTOR</scope>
</reference>
<keyword id="KW-0002">3D-structure</keyword>
<keyword id="KW-0007">Acetylation</keyword>
<keyword id="KW-0025">Alternative splicing</keyword>
<keyword id="KW-1003">Cell membrane</keyword>
<keyword id="KW-0967">Endosome</keyword>
<keyword id="KW-0342">GTP-binding</keyword>
<keyword id="KW-0378">Hydrolase</keyword>
<keyword id="KW-0449">Lipoprotein</keyword>
<keyword id="KW-0460">Magnesium</keyword>
<keyword id="KW-0472">Membrane</keyword>
<keyword id="KW-0479">Metal-binding</keyword>
<keyword id="KW-0488">Methylation</keyword>
<keyword id="KW-0547">Nucleotide-binding</keyword>
<keyword id="KW-0597">Phosphoprotein</keyword>
<keyword id="KW-0636">Prenylation</keyword>
<keyword id="KW-0653">Protein transport</keyword>
<keyword id="KW-1267">Proteomics identification</keyword>
<keyword id="KW-1185">Reference proteome</keyword>
<keyword id="KW-0813">Transport</keyword>
<accession>P61018</accession>
<accession>P22750</accession>
<accession>Q7Z514</accession>
<accession>Q9HBR6</accession>
<feature type="initiator methionine" description="Removed" evidence="12">
    <location>
        <position position="1"/>
    </location>
</feature>
<feature type="chain" id="PRO_0000121099" description="Ras-related protein Rab-4B">
    <location>
        <begin position="2"/>
        <end position="213"/>
    </location>
</feature>
<feature type="short sequence motif" description="Switch 1" evidence="3">
    <location>
        <begin position="39"/>
        <end position="44"/>
    </location>
</feature>
<feature type="short sequence motif" description="Switch 2" evidence="3">
    <location>
        <begin position="65"/>
        <end position="74"/>
    </location>
</feature>
<feature type="binding site" evidence="6 11">
    <location>
        <position position="18"/>
    </location>
    <ligand>
        <name>GDP</name>
        <dbReference type="ChEBI" id="CHEBI:58189"/>
    </ligand>
</feature>
<feature type="binding site" evidence="2">
    <location>
        <position position="18"/>
    </location>
    <ligand>
        <name>GTP</name>
        <dbReference type="ChEBI" id="CHEBI:37565"/>
    </ligand>
</feature>
<feature type="binding site" evidence="6 11">
    <location>
        <position position="19"/>
    </location>
    <ligand>
        <name>GDP</name>
        <dbReference type="ChEBI" id="CHEBI:58189"/>
    </ligand>
</feature>
<feature type="binding site" evidence="2">
    <location>
        <position position="19"/>
    </location>
    <ligand>
        <name>GTP</name>
        <dbReference type="ChEBI" id="CHEBI:37565"/>
    </ligand>
</feature>
<feature type="binding site" evidence="6 11">
    <location>
        <position position="20"/>
    </location>
    <ligand>
        <name>GDP</name>
        <dbReference type="ChEBI" id="CHEBI:58189"/>
    </ligand>
</feature>
<feature type="binding site" evidence="2">
    <location>
        <position position="20"/>
    </location>
    <ligand>
        <name>GTP</name>
        <dbReference type="ChEBI" id="CHEBI:37565"/>
    </ligand>
</feature>
<feature type="binding site" evidence="6 11">
    <location>
        <position position="21"/>
    </location>
    <ligand>
        <name>GDP</name>
        <dbReference type="ChEBI" id="CHEBI:58189"/>
    </ligand>
</feature>
<feature type="binding site" evidence="2">
    <location>
        <position position="21"/>
    </location>
    <ligand>
        <name>GTP</name>
        <dbReference type="ChEBI" id="CHEBI:37565"/>
    </ligand>
</feature>
<feature type="binding site" evidence="6 11">
    <location>
        <position position="22"/>
    </location>
    <ligand>
        <name>GDP</name>
        <dbReference type="ChEBI" id="CHEBI:58189"/>
    </ligand>
</feature>
<feature type="binding site" evidence="2">
    <location>
        <position position="22"/>
    </location>
    <ligand>
        <name>GTP</name>
        <dbReference type="ChEBI" id="CHEBI:37565"/>
    </ligand>
</feature>
<feature type="binding site" evidence="6 11">
    <location>
        <position position="22"/>
    </location>
    <ligand>
        <name>Mg(2+)</name>
        <dbReference type="ChEBI" id="CHEBI:18420"/>
    </ligand>
</feature>
<feature type="binding site" evidence="6 11">
    <location>
        <position position="23"/>
    </location>
    <ligand>
        <name>GDP</name>
        <dbReference type="ChEBI" id="CHEBI:58189"/>
    </ligand>
</feature>
<feature type="binding site" evidence="2">
    <location>
        <position position="23"/>
    </location>
    <ligand>
        <name>GTP</name>
        <dbReference type="ChEBI" id="CHEBI:37565"/>
    </ligand>
</feature>
<feature type="binding site" evidence="2">
    <location>
        <position position="37"/>
    </location>
    <ligand>
        <name>GTP</name>
        <dbReference type="ChEBI" id="CHEBI:37565"/>
    </ligand>
</feature>
<feature type="binding site" evidence="2">
    <location>
        <position position="39"/>
    </location>
    <ligand>
        <name>GTP</name>
        <dbReference type="ChEBI" id="CHEBI:37565"/>
    </ligand>
</feature>
<feature type="binding site" evidence="2">
    <location>
        <position position="40"/>
    </location>
    <ligand>
        <name>GTP</name>
        <dbReference type="ChEBI" id="CHEBI:37565"/>
    </ligand>
</feature>
<feature type="binding site" evidence="2">
    <location>
        <position position="40"/>
    </location>
    <ligand>
        <name>Mg(2+)</name>
        <dbReference type="ChEBI" id="CHEBI:18420"/>
    </ligand>
</feature>
<feature type="binding site" evidence="6 11">
    <location>
        <position position="63"/>
    </location>
    <ligand>
        <name>Mg(2+)</name>
        <dbReference type="ChEBI" id="CHEBI:18420"/>
    </ligand>
</feature>
<feature type="binding site" evidence="2">
    <location>
        <position position="66"/>
    </location>
    <ligand>
        <name>GTP</name>
        <dbReference type="ChEBI" id="CHEBI:37565"/>
    </ligand>
</feature>
<feature type="binding site" evidence="6 11">
    <location>
        <position position="121"/>
    </location>
    <ligand>
        <name>GDP</name>
        <dbReference type="ChEBI" id="CHEBI:58189"/>
    </ligand>
</feature>
<feature type="binding site" evidence="2">
    <location>
        <position position="121"/>
    </location>
    <ligand>
        <name>GTP</name>
        <dbReference type="ChEBI" id="CHEBI:37565"/>
    </ligand>
</feature>
<feature type="binding site" evidence="6 11">
    <location>
        <position position="122"/>
    </location>
    <ligand>
        <name>GDP</name>
        <dbReference type="ChEBI" id="CHEBI:58189"/>
    </ligand>
</feature>
<feature type="binding site" evidence="2">
    <location>
        <position position="122"/>
    </location>
    <ligand>
        <name>GTP</name>
        <dbReference type="ChEBI" id="CHEBI:37565"/>
    </ligand>
</feature>
<feature type="binding site" evidence="6 11">
    <location>
        <position position="124"/>
    </location>
    <ligand>
        <name>GDP</name>
        <dbReference type="ChEBI" id="CHEBI:58189"/>
    </ligand>
</feature>
<feature type="binding site" evidence="2">
    <location>
        <position position="124"/>
    </location>
    <ligand>
        <name>GTP</name>
        <dbReference type="ChEBI" id="CHEBI:37565"/>
    </ligand>
</feature>
<feature type="binding site" evidence="6 11">
    <location>
        <position position="152"/>
    </location>
    <ligand>
        <name>GDP</name>
        <dbReference type="ChEBI" id="CHEBI:58189"/>
    </ligand>
</feature>
<feature type="binding site" evidence="2">
    <location>
        <position position="152"/>
    </location>
    <ligand>
        <name>GTP</name>
        <dbReference type="ChEBI" id="CHEBI:37565"/>
    </ligand>
</feature>
<feature type="binding site" evidence="6 11">
    <location>
        <position position="153"/>
    </location>
    <ligand>
        <name>GDP</name>
        <dbReference type="ChEBI" id="CHEBI:58189"/>
    </ligand>
</feature>
<feature type="binding site" evidence="2">
    <location>
        <position position="153"/>
    </location>
    <ligand>
        <name>GTP</name>
        <dbReference type="ChEBI" id="CHEBI:37565"/>
    </ligand>
</feature>
<feature type="modified residue" description="N-acetylalanine" evidence="12">
    <location>
        <position position="2"/>
    </location>
</feature>
<feature type="modified residue" description="5-glutamyl serotonin" evidence="4">
    <location>
        <position position="67"/>
    </location>
</feature>
<feature type="modified residue" description="Phosphoserine" evidence="2">
    <location>
        <position position="185"/>
    </location>
</feature>
<feature type="modified residue" description="Phosphoserine" evidence="13">
    <location>
        <position position="193"/>
    </location>
</feature>
<feature type="modified residue" description="Cysteine methyl ester" evidence="1">
    <location>
        <position position="213"/>
    </location>
</feature>
<feature type="lipid moiety-binding region" description="S-geranylgeranyl cysteine" evidence="1">
    <location>
        <position position="211"/>
    </location>
</feature>
<feature type="lipid moiety-binding region" description="S-geranylgeranyl cysteine" evidence="1">
    <location>
        <position position="213"/>
    </location>
</feature>
<feature type="splice variant" id="VSP_013567" description="In isoform 2." evidence="7">
    <original>MAETY</original>
    <variation>MSVSLPLTVMVRERDWIGIHLFSLYLSLPVGIPDFGSIWS</variation>
    <location>
        <begin position="1"/>
        <end position="5"/>
    </location>
</feature>
<feature type="mutagenesis site" description="GTP-locked. Interacts with RUFY1." evidence="5">
    <original>Q</original>
    <variation>L</variation>
    <location>
        <position position="67"/>
    </location>
</feature>
<feature type="sequence conflict" description="In Ref. 1; AAP97171." evidence="9" ref="1">
    <original>TYD</original>
    <variation>DRH</variation>
    <location>
        <begin position="4"/>
        <end position="6"/>
    </location>
</feature>
<feature type="strand" evidence="14">
    <location>
        <begin position="7"/>
        <end position="16"/>
    </location>
</feature>
<feature type="helix" evidence="14">
    <location>
        <begin position="21"/>
        <end position="29"/>
    </location>
</feature>
<feature type="strand" evidence="14">
    <location>
        <begin position="45"/>
        <end position="52"/>
    </location>
</feature>
<feature type="strand" evidence="14">
    <location>
        <begin position="55"/>
        <end position="62"/>
    </location>
</feature>
<feature type="helix" evidence="14">
    <location>
        <begin position="67"/>
        <end position="70"/>
    </location>
</feature>
<feature type="helix" evidence="14">
    <location>
        <begin position="75"/>
        <end position="78"/>
    </location>
</feature>
<feature type="strand" evidence="14">
    <location>
        <begin position="82"/>
        <end position="89"/>
    </location>
</feature>
<feature type="helix" evidence="14">
    <location>
        <begin position="93"/>
        <end position="97"/>
    </location>
</feature>
<feature type="helix" evidence="14">
    <location>
        <begin position="99"/>
        <end position="109"/>
    </location>
</feature>
<feature type="strand" evidence="14">
    <location>
        <begin position="115"/>
        <end position="121"/>
    </location>
</feature>
<feature type="helix" evidence="14">
    <location>
        <begin position="123"/>
        <end position="128"/>
    </location>
</feature>
<feature type="helix" evidence="14">
    <location>
        <begin position="133"/>
        <end position="142"/>
    </location>
</feature>
<feature type="strand" evidence="14">
    <location>
        <begin position="146"/>
        <end position="150"/>
    </location>
</feature>
<feature type="turn" evidence="14">
    <location>
        <begin position="152"/>
        <end position="154"/>
    </location>
</feature>
<feature type="helix" evidence="14">
    <location>
        <begin position="158"/>
        <end position="174"/>
    </location>
</feature>
<feature type="helix" evidence="14">
    <location>
        <begin position="180"/>
        <end position="182"/>
    </location>
</feature>
<comment type="function">
    <text evidence="2 4 5">The small GTPases Rab are key regulators of intracellular membrane trafficking, from the formation of transport vesicles to their fusion with membranes. Rabs cycle between an inactive GDP-bound form and an active GTP-bound form that is able to recruit to membranes different set of downstream effectors directly responsible for vesicle formation, movement, tethering and fusion (By similarity). RAB4B mediates endosomal tethering and fusion through the interaction with RUFY1 and RAB14 (PubMed:20534812). Acts as a regulator of platelet alpha-granule release during activation and aggregation of platelets (By similarity).</text>
</comment>
<comment type="catalytic activity">
    <reaction evidence="2">
        <text>GTP + H2O = GDP + phosphate + H(+)</text>
        <dbReference type="Rhea" id="RHEA:19669"/>
        <dbReference type="ChEBI" id="CHEBI:15377"/>
        <dbReference type="ChEBI" id="CHEBI:15378"/>
        <dbReference type="ChEBI" id="CHEBI:37565"/>
        <dbReference type="ChEBI" id="CHEBI:43474"/>
        <dbReference type="ChEBI" id="CHEBI:58189"/>
        <dbReference type="EC" id="3.6.5.2"/>
    </reaction>
    <physiologicalReaction direction="left-to-right" evidence="2">
        <dbReference type="Rhea" id="RHEA:19670"/>
    </physiologicalReaction>
</comment>
<comment type="cofactor">
    <cofactor evidence="6">
        <name>Mg(2+)</name>
        <dbReference type="ChEBI" id="CHEBI:18420"/>
    </cofactor>
</comment>
<comment type="activity regulation">
    <text evidence="9">Regulated by guanine nucleotide exchange factors (GEFs) which promote the exchange of bound GDP for free GTP. Regulated by GTPase activating proteins (GAPs) which increase the GTP hydrolysis activity. Inhibited by GDP dissociation inhibitors (GDIs).</text>
</comment>
<comment type="subunit">
    <text evidence="5">Interacts (GTP-bound form) with RUFY1; the interaction allows endosomal tethering and fusion.</text>
</comment>
<comment type="interaction">
    <interactant intactId="EBI-10218066">
        <id>P61018</id>
    </interactant>
    <interactant intactId="EBI-12006120">
        <id>A0A087WZT3</id>
        <label>BOLA2-SMG1P6</label>
    </interactant>
    <organismsDiffer>false</organismsDiffer>
    <experiments>3</experiments>
</comment>
<comment type="interaction">
    <interactant intactId="EBI-10218066">
        <id>P61018</id>
    </interactant>
    <interactant intactId="EBI-374969">
        <id>O75419</id>
        <label>CDC45</label>
    </interactant>
    <organismsDiffer>false</organismsDiffer>
    <experiments>3</experiments>
</comment>
<comment type="interaction">
    <interactant intactId="EBI-10218066">
        <id>P61018</id>
    </interactant>
    <interactant intactId="EBI-949824">
        <id>O00471</id>
        <label>EXOC5</label>
    </interactant>
    <organismsDiffer>false</organismsDiffer>
    <experiments>6</experiments>
</comment>
<comment type="interaction">
    <interactant intactId="EBI-10218066">
        <id>P61018</id>
    </interactant>
    <interactant intactId="EBI-752049">
        <id>Q8NEG0</id>
        <label>GARIN6</label>
    </interactant>
    <organismsDiffer>false</organismsDiffer>
    <experiments>3</experiments>
</comment>
<comment type="interaction">
    <interactant intactId="EBI-10218066">
        <id>P61018</id>
    </interactant>
    <interactant intactId="EBI-447043">
        <id>Q15276</id>
        <label>RABEP1</label>
    </interactant>
    <organismsDiffer>false</organismsDiffer>
    <experiments>3</experiments>
</comment>
<comment type="interaction">
    <interactant intactId="EBI-10218066">
        <id>P61018</id>
    </interactant>
    <interactant intactId="EBI-2799833">
        <id>Q8N1B4</id>
        <label>VPS52</label>
    </interactant>
    <organismsDiffer>false</organismsDiffer>
    <experiments>3</experiments>
</comment>
<comment type="subcellular location">
    <subcellularLocation>
        <location evidence="9">Cell membrane</location>
        <topology evidence="9">Lipid-anchor</topology>
        <orientation evidence="9">Cytoplasmic side</orientation>
    </subcellularLocation>
    <subcellularLocation>
        <location evidence="5">Early endosome membrane</location>
        <topology evidence="9">Lipid-anchor</topology>
        <orientation evidence="9">Cytoplasmic side</orientation>
    </subcellularLocation>
</comment>
<comment type="alternative products">
    <event type="alternative splicing"/>
    <isoform>
        <id>P61018-1</id>
        <name>1</name>
        <sequence type="displayed"/>
    </isoform>
    <isoform>
        <id>P61018-2</id>
        <name>2</name>
        <sequence type="described" ref="VSP_013567"/>
    </isoform>
</comment>
<comment type="domain">
    <text evidence="3">Switch 1, switch 2 and the interswitch regions are characteristic of Rab GTPases and mediate the interactions with Rab downstream effectors. The switch regions undergo conformational changes upon nucleotide binding which drives interaction with specific sets of effector proteins, with most effectors only binding to GTP-bound Rab.</text>
</comment>
<comment type="PTM">
    <text evidence="4">Serotonylation of Gln-67 by TGM2 during activation and aggregation of platelets leads to constitutive activation of GTPase activity.</text>
</comment>
<comment type="similarity">
    <text evidence="9">Belongs to the small GTPase superfamily. Rab family.</text>
</comment>
<proteinExistence type="evidence at protein level"/>
<organism>
    <name type="scientific">Homo sapiens</name>
    <name type="common">Human</name>
    <dbReference type="NCBI Taxonomy" id="9606"/>
    <lineage>
        <taxon>Eukaryota</taxon>
        <taxon>Metazoa</taxon>
        <taxon>Chordata</taxon>
        <taxon>Craniata</taxon>
        <taxon>Vertebrata</taxon>
        <taxon>Euteleostomi</taxon>
        <taxon>Mammalia</taxon>
        <taxon>Eutheria</taxon>
        <taxon>Euarchontoglires</taxon>
        <taxon>Primates</taxon>
        <taxon>Haplorrhini</taxon>
        <taxon>Catarrhini</taxon>
        <taxon>Hominidae</taxon>
        <taxon>Homo</taxon>
    </lineage>
</organism>
<dbReference type="EC" id="3.6.5.2" evidence="2"/>
<dbReference type="EMBL" id="AF087861">
    <property type="protein sequence ID" value="AAP97171.1"/>
    <property type="molecule type" value="mRNA"/>
</dbReference>
<dbReference type="EMBL" id="AF165522">
    <property type="protein sequence ID" value="AAD45923.1"/>
    <property type="molecule type" value="mRNA"/>
</dbReference>
<dbReference type="EMBL" id="AF217985">
    <property type="protein sequence ID" value="AAG17228.1"/>
    <property type="molecule type" value="mRNA"/>
</dbReference>
<dbReference type="EMBL" id="AF498935">
    <property type="protein sequence ID" value="AAM21083.1"/>
    <property type="molecule type" value="mRNA"/>
</dbReference>
<dbReference type="EMBL" id="BC046927">
    <property type="protein sequence ID" value="AAH46927.1"/>
    <property type="molecule type" value="mRNA"/>
</dbReference>
<dbReference type="CCDS" id="CCDS33030.1">
    <molecule id="P61018-1"/>
</dbReference>
<dbReference type="RefSeq" id="NP_057238.3">
    <molecule id="P61018-1"/>
    <property type="nucleotide sequence ID" value="NM_016154.4"/>
</dbReference>
<dbReference type="PDB" id="2O52">
    <property type="method" value="X-ray"/>
    <property type="resolution" value="2.20 A"/>
    <property type="chains" value="A/B=6-183"/>
</dbReference>
<dbReference type="PDBsum" id="2O52"/>
<dbReference type="SMR" id="P61018"/>
<dbReference type="BioGRID" id="119816">
    <property type="interactions" value="34"/>
</dbReference>
<dbReference type="FunCoup" id="P61018">
    <property type="interactions" value="1196"/>
</dbReference>
<dbReference type="IntAct" id="P61018">
    <property type="interactions" value="27"/>
</dbReference>
<dbReference type="STRING" id="9606.ENSP00000470246"/>
<dbReference type="iPTMnet" id="P61018"/>
<dbReference type="PhosphoSitePlus" id="P61018"/>
<dbReference type="SwissPalm" id="P61018"/>
<dbReference type="BioMuta" id="RAB4B"/>
<dbReference type="DMDM" id="46577635"/>
<dbReference type="jPOST" id="P61018"/>
<dbReference type="MassIVE" id="P61018"/>
<dbReference type="PaxDb" id="9606-ENSP00000349560"/>
<dbReference type="PeptideAtlas" id="P61018"/>
<dbReference type="ProteomicsDB" id="57249">
    <molecule id="P61018-1"/>
</dbReference>
<dbReference type="ProteomicsDB" id="57250">
    <molecule id="P61018-2"/>
</dbReference>
<dbReference type="Pumba" id="P61018"/>
<dbReference type="Antibodypedia" id="48676">
    <property type="antibodies" value="97 antibodies from 17 providers"/>
</dbReference>
<dbReference type="DNASU" id="53916"/>
<dbReference type="Ensembl" id="ENST00000357052.8">
    <molecule id="P61018-1"/>
    <property type="protein sequence ID" value="ENSP00000349560.2"/>
    <property type="gene ID" value="ENSG00000167578.18"/>
</dbReference>
<dbReference type="Ensembl" id="ENST00000594800.5">
    <molecule id="P61018-1"/>
    <property type="protein sequence ID" value="ENSP00000470246.1"/>
    <property type="gene ID" value="ENSG00000167578.18"/>
</dbReference>
<dbReference type="GeneID" id="53916"/>
<dbReference type="KEGG" id="hsa:53916"/>
<dbReference type="MANE-Select" id="ENST00000357052.8">
    <property type="protein sequence ID" value="ENSP00000349560.2"/>
    <property type="RefSeq nucleotide sequence ID" value="NM_016154.5"/>
    <property type="RefSeq protein sequence ID" value="NP_057238.3"/>
</dbReference>
<dbReference type="UCSC" id="uc002opd.2">
    <molecule id="P61018-1"/>
    <property type="organism name" value="human"/>
</dbReference>
<dbReference type="AGR" id="HGNC:9782"/>
<dbReference type="CTD" id="53916"/>
<dbReference type="DisGeNET" id="53916"/>
<dbReference type="GeneCards" id="RAB4B"/>
<dbReference type="HGNC" id="HGNC:9782">
    <property type="gene designation" value="RAB4B"/>
</dbReference>
<dbReference type="HPA" id="ENSG00000167578">
    <property type="expression patterns" value="Tissue enhanced (brain)"/>
</dbReference>
<dbReference type="MIM" id="612945">
    <property type="type" value="gene"/>
</dbReference>
<dbReference type="neXtProt" id="NX_P61018"/>
<dbReference type="OpenTargets" id="ENSG00000167578"/>
<dbReference type="PharmGKB" id="PA34142"/>
<dbReference type="VEuPathDB" id="HostDB:ENSG00000167578"/>
<dbReference type="eggNOG" id="KOG0086">
    <property type="taxonomic scope" value="Eukaryota"/>
</dbReference>
<dbReference type="GeneTree" id="ENSGT00940000159399"/>
<dbReference type="HOGENOM" id="CLU_041217_23_1_1"/>
<dbReference type="InParanoid" id="P61018"/>
<dbReference type="OMA" id="ASQNICI"/>
<dbReference type="OrthoDB" id="9989112at2759"/>
<dbReference type="PAN-GO" id="P61018">
    <property type="GO annotations" value="7 GO annotations based on evolutionary models"/>
</dbReference>
<dbReference type="PhylomeDB" id="P61018"/>
<dbReference type="TreeFam" id="TF300032"/>
<dbReference type="PathwayCommons" id="P61018"/>
<dbReference type="Reactome" id="R-HSA-6798695">
    <property type="pathway name" value="Neutrophil degranulation"/>
</dbReference>
<dbReference type="Reactome" id="R-HSA-8873719">
    <property type="pathway name" value="RAB geranylgeranylation"/>
</dbReference>
<dbReference type="Reactome" id="R-HSA-8875656">
    <property type="pathway name" value="MET receptor recycling"/>
</dbReference>
<dbReference type="SignaLink" id="P61018"/>
<dbReference type="BioGRID-ORCS" id="53916">
    <property type="hits" value="15 hits in 1155 CRISPR screens"/>
</dbReference>
<dbReference type="CD-CODE" id="FB4E32DD">
    <property type="entry name" value="Presynaptic clusters and postsynaptic densities"/>
</dbReference>
<dbReference type="EvolutionaryTrace" id="P61018"/>
<dbReference type="GenomeRNAi" id="53916"/>
<dbReference type="Pharos" id="P61018">
    <property type="development level" value="Tbio"/>
</dbReference>
<dbReference type="PRO" id="PR:P61018"/>
<dbReference type="Proteomes" id="UP000005640">
    <property type="component" value="Chromosome 19"/>
</dbReference>
<dbReference type="RNAct" id="P61018">
    <property type="molecule type" value="protein"/>
</dbReference>
<dbReference type="Bgee" id="ENSG00000167578">
    <property type="expression patterns" value="Expressed in C1 segment of cervical spinal cord and 97 other cell types or tissues"/>
</dbReference>
<dbReference type="ExpressionAtlas" id="P61018">
    <property type="expression patterns" value="baseline and differential"/>
</dbReference>
<dbReference type="GO" id="GO:0005829">
    <property type="term" value="C:cytosol"/>
    <property type="evidence" value="ECO:0007669"/>
    <property type="project" value="GOC"/>
</dbReference>
<dbReference type="GO" id="GO:0031901">
    <property type="term" value="C:early endosome membrane"/>
    <property type="evidence" value="ECO:0000314"/>
    <property type="project" value="UniProt"/>
</dbReference>
<dbReference type="GO" id="GO:0032593">
    <property type="term" value="C:insulin-responsive compartment"/>
    <property type="evidence" value="ECO:0000314"/>
    <property type="project" value="UniProtKB"/>
</dbReference>
<dbReference type="GO" id="GO:0048471">
    <property type="term" value="C:perinuclear region of cytoplasm"/>
    <property type="evidence" value="ECO:0000314"/>
    <property type="project" value="UniProtKB"/>
</dbReference>
<dbReference type="GO" id="GO:0005886">
    <property type="term" value="C:plasma membrane"/>
    <property type="evidence" value="ECO:0000304"/>
    <property type="project" value="Reactome"/>
</dbReference>
<dbReference type="GO" id="GO:0055037">
    <property type="term" value="C:recycling endosome"/>
    <property type="evidence" value="ECO:0000314"/>
    <property type="project" value="UniProtKB"/>
</dbReference>
<dbReference type="GO" id="GO:0030667">
    <property type="term" value="C:secretory granule membrane"/>
    <property type="evidence" value="ECO:0000304"/>
    <property type="project" value="Reactome"/>
</dbReference>
<dbReference type="GO" id="GO:0003925">
    <property type="term" value="F:G protein activity"/>
    <property type="evidence" value="ECO:0007669"/>
    <property type="project" value="UniProtKB-EC"/>
</dbReference>
<dbReference type="GO" id="GO:0005525">
    <property type="term" value="F:GTP binding"/>
    <property type="evidence" value="ECO:0000318"/>
    <property type="project" value="GO_Central"/>
</dbReference>
<dbReference type="GO" id="GO:0003924">
    <property type="term" value="F:GTPase activity"/>
    <property type="evidence" value="ECO:0000314"/>
    <property type="project" value="UniProt"/>
</dbReference>
<dbReference type="GO" id="GO:0046323">
    <property type="term" value="P:D-glucose import"/>
    <property type="evidence" value="ECO:0000315"/>
    <property type="project" value="UniProtKB"/>
</dbReference>
<dbReference type="GO" id="GO:0034498">
    <property type="term" value="P:early endosome to Golgi transport"/>
    <property type="evidence" value="ECO:0000314"/>
    <property type="project" value="UniProt"/>
</dbReference>
<dbReference type="GO" id="GO:0034058">
    <property type="term" value="P:endosomal vesicle fusion"/>
    <property type="evidence" value="ECO:0000314"/>
    <property type="project" value="UniProt"/>
</dbReference>
<dbReference type="GO" id="GO:0015031">
    <property type="term" value="P:protein transport"/>
    <property type="evidence" value="ECO:0007669"/>
    <property type="project" value="UniProtKB-KW"/>
</dbReference>
<dbReference type="GO" id="GO:0032482">
    <property type="term" value="P:Rab protein signal transduction"/>
    <property type="evidence" value="ECO:0007669"/>
    <property type="project" value="InterPro"/>
</dbReference>
<dbReference type="GO" id="GO:0030100">
    <property type="term" value="P:regulation of endocytosis"/>
    <property type="evidence" value="ECO:0000318"/>
    <property type="project" value="GO_Central"/>
</dbReference>
<dbReference type="GO" id="GO:0016192">
    <property type="term" value="P:vesicle-mediated transport"/>
    <property type="evidence" value="ECO:0000318"/>
    <property type="project" value="GO_Central"/>
</dbReference>
<dbReference type="CDD" id="cd04113">
    <property type="entry name" value="Rab4"/>
    <property type="match status" value="1"/>
</dbReference>
<dbReference type="FunFam" id="3.40.50.300:FF:000280">
    <property type="entry name" value="Putative ras-related protein Rab-4B"/>
    <property type="match status" value="1"/>
</dbReference>
<dbReference type="Gene3D" id="3.40.50.300">
    <property type="entry name" value="P-loop containing nucleotide triphosphate hydrolases"/>
    <property type="match status" value="1"/>
</dbReference>
<dbReference type="InterPro" id="IPR027417">
    <property type="entry name" value="P-loop_NTPase"/>
</dbReference>
<dbReference type="InterPro" id="IPR041819">
    <property type="entry name" value="Rab4"/>
</dbReference>
<dbReference type="InterPro" id="IPR050209">
    <property type="entry name" value="Rab_GTPases_membrane_traffic"/>
</dbReference>
<dbReference type="InterPro" id="IPR005225">
    <property type="entry name" value="Small_GTP-bd"/>
</dbReference>
<dbReference type="InterPro" id="IPR001806">
    <property type="entry name" value="Small_GTPase"/>
</dbReference>
<dbReference type="NCBIfam" id="TIGR00231">
    <property type="entry name" value="small_GTP"/>
    <property type="match status" value="1"/>
</dbReference>
<dbReference type="PANTHER" id="PTHR47979">
    <property type="entry name" value="DRAB11-RELATED"/>
    <property type="match status" value="1"/>
</dbReference>
<dbReference type="Pfam" id="PF00071">
    <property type="entry name" value="Ras"/>
    <property type="match status" value="1"/>
</dbReference>
<dbReference type="PRINTS" id="PR00449">
    <property type="entry name" value="RASTRNSFRMNG"/>
</dbReference>
<dbReference type="SMART" id="SM00175">
    <property type="entry name" value="RAB"/>
    <property type="match status" value="1"/>
</dbReference>
<dbReference type="SMART" id="SM00176">
    <property type="entry name" value="RAN"/>
    <property type="match status" value="1"/>
</dbReference>
<dbReference type="SMART" id="SM00173">
    <property type="entry name" value="RAS"/>
    <property type="match status" value="1"/>
</dbReference>
<dbReference type="SMART" id="SM00174">
    <property type="entry name" value="RHO"/>
    <property type="match status" value="1"/>
</dbReference>
<dbReference type="SUPFAM" id="SSF52540">
    <property type="entry name" value="P-loop containing nucleoside triphosphate hydrolases"/>
    <property type="match status" value="1"/>
</dbReference>
<dbReference type="PROSITE" id="PS51419">
    <property type="entry name" value="RAB"/>
    <property type="match status" value="1"/>
</dbReference>
<evidence type="ECO:0000250" key="1"/>
<evidence type="ECO:0000250" key="2">
    <source>
        <dbReference type="UniProtKB" id="P20338"/>
    </source>
</evidence>
<evidence type="ECO:0000250" key="3">
    <source>
        <dbReference type="UniProtKB" id="P61106"/>
    </source>
</evidence>
<evidence type="ECO:0000250" key="4">
    <source>
        <dbReference type="UniProtKB" id="Q91ZR1"/>
    </source>
</evidence>
<evidence type="ECO:0000269" key="5">
    <source>
    </source>
</evidence>
<evidence type="ECO:0000269" key="6">
    <source ref="10"/>
</evidence>
<evidence type="ECO:0000303" key="7">
    <source>
    </source>
</evidence>
<evidence type="ECO:0000303" key="8">
    <source>
    </source>
</evidence>
<evidence type="ECO:0000305" key="9"/>
<evidence type="ECO:0000312" key="10">
    <source>
        <dbReference type="HGNC" id="HGNC:9782"/>
    </source>
</evidence>
<evidence type="ECO:0007744" key="11">
    <source>
        <dbReference type="PDB" id="2O52"/>
    </source>
</evidence>
<evidence type="ECO:0007744" key="12">
    <source>
    </source>
</evidence>
<evidence type="ECO:0007744" key="13">
    <source>
    </source>
</evidence>
<evidence type="ECO:0007829" key="14">
    <source>
        <dbReference type="PDB" id="2O52"/>
    </source>
</evidence>
<protein>
    <recommendedName>
        <fullName evidence="9">Ras-related protein Rab-4B</fullName>
        <ecNumber evidence="2">3.6.5.2</ecNumber>
    </recommendedName>
</protein>